<sequence>MQIALLLLIAYLLGAIPTGLIVGKLFFNKDIRKFGSGNLGATNTFRVLGKKAGIFVTIFDVAKGVLPAIFPIIYDLDIHGIWFGLAAIIGHVYPIYLNFKGGKAVATSAGVILGVNPVVFLIIAVIFFTLLFTTRMVSLTSILTSIGNFITTLFFDDIILQIISFLIMLLIIIRHSSNIKRIISGTEPKIQFKK</sequence>
<dbReference type="EC" id="2.3.1.275" evidence="1"/>
<dbReference type="EMBL" id="AP009484">
    <property type="protein sequence ID" value="BAH17717.1"/>
    <property type="molecule type" value="Genomic_DNA"/>
</dbReference>
<dbReference type="RefSeq" id="WP_012656915.1">
    <property type="nucleotide sequence ID" value="NC_011999.1"/>
</dbReference>
<dbReference type="SMR" id="B9EBV6"/>
<dbReference type="STRING" id="458233.MCCL_1010"/>
<dbReference type="KEGG" id="mcl:MCCL_1010"/>
<dbReference type="eggNOG" id="COG0344">
    <property type="taxonomic scope" value="Bacteria"/>
</dbReference>
<dbReference type="HOGENOM" id="CLU_081254_4_0_9"/>
<dbReference type="OrthoDB" id="9777124at2"/>
<dbReference type="UniPathway" id="UPA00085"/>
<dbReference type="Proteomes" id="UP000001383">
    <property type="component" value="Chromosome"/>
</dbReference>
<dbReference type="GO" id="GO:0005886">
    <property type="term" value="C:plasma membrane"/>
    <property type="evidence" value="ECO:0007669"/>
    <property type="project" value="UniProtKB-SubCell"/>
</dbReference>
<dbReference type="GO" id="GO:0043772">
    <property type="term" value="F:acyl-phosphate glycerol-3-phosphate acyltransferase activity"/>
    <property type="evidence" value="ECO:0007669"/>
    <property type="project" value="UniProtKB-UniRule"/>
</dbReference>
<dbReference type="GO" id="GO:0008654">
    <property type="term" value="P:phospholipid biosynthetic process"/>
    <property type="evidence" value="ECO:0007669"/>
    <property type="project" value="UniProtKB-UniRule"/>
</dbReference>
<dbReference type="HAMAP" id="MF_01043">
    <property type="entry name" value="PlsY"/>
    <property type="match status" value="1"/>
</dbReference>
<dbReference type="InterPro" id="IPR003811">
    <property type="entry name" value="G3P_acylTferase_PlsY"/>
</dbReference>
<dbReference type="NCBIfam" id="TIGR00023">
    <property type="entry name" value="glycerol-3-phosphate 1-O-acyltransferase PlsY"/>
    <property type="match status" value="1"/>
</dbReference>
<dbReference type="PANTHER" id="PTHR30309:SF0">
    <property type="entry name" value="GLYCEROL-3-PHOSPHATE ACYLTRANSFERASE-RELATED"/>
    <property type="match status" value="1"/>
</dbReference>
<dbReference type="PANTHER" id="PTHR30309">
    <property type="entry name" value="INNER MEMBRANE PROTEIN YGIH"/>
    <property type="match status" value="1"/>
</dbReference>
<dbReference type="Pfam" id="PF02660">
    <property type="entry name" value="G3P_acyltransf"/>
    <property type="match status" value="1"/>
</dbReference>
<dbReference type="SMART" id="SM01207">
    <property type="entry name" value="G3P_acyltransf"/>
    <property type="match status" value="1"/>
</dbReference>
<protein>
    <recommendedName>
        <fullName evidence="1">Glycerol-3-phosphate acyltransferase</fullName>
    </recommendedName>
    <alternativeName>
        <fullName evidence="1">Acyl-PO4 G3P acyltransferase</fullName>
    </alternativeName>
    <alternativeName>
        <fullName evidence="1">Acyl-phosphate--glycerol-3-phosphate acyltransferase</fullName>
    </alternativeName>
    <alternativeName>
        <fullName evidence="1">G3P acyltransferase</fullName>
        <shortName evidence="1">GPAT</shortName>
        <ecNumber evidence="1">2.3.1.275</ecNumber>
    </alternativeName>
    <alternativeName>
        <fullName evidence="1">Lysophosphatidic acid synthase</fullName>
        <shortName evidence="1">LPA synthase</shortName>
    </alternativeName>
</protein>
<reference key="1">
    <citation type="journal article" date="2009" name="J. Bacteriol.">
        <title>Complete genome sequence of Macrococcus caseolyticus strain JCSCS5402, reflecting the ancestral genome of the human-pathogenic staphylococci.</title>
        <authorList>
            <person name="Baba T."/>
            <person name="Kuwahara-Arai K."/>
            <person name="Uchiyama I."/>
            <person name="Takeuchi F."/>
            <person name="Ito T."/>
            <person name="Hiramatsu K."/>
        </authorList>
    </citation>
    <scope>NUCLEOTIDE SEQUENCE [LARGE SCALE GENOMIC DNA]</scope>
    <source>
        <strain>JCSC5402</strain>
    </source>
</reference>
<organism>
    <name type="scientific">Macrococcus caseolyticus (strain JCSC5402)</name>
    <name type="common">Macrococcoides caseolyticum</name>
    <dbReference type="NCBI Taxonomy" id="458233"/>
    <lineage>
        <taxon>Bacteria</taxon>
        <taxon>Bacillati</taxon>
        <taxon>Bacillota</taxon>
        <taxon>Bacilli</taxon>
        <taxon>Bacillales</taxon>
        <taxon>Staphylococcaceae</taxon>
        <taxon>Macrococcoides</taxon>
    </lineage>
</organism>
<accession>B9EBV6</accession>
<gene>
    <name evidence="1" type="primary">plsY</name>
    <name type="ordered locus">MCCL_1010</name>
</gene>
<proteinExistence type="inferred from homology"/>
<comment type="function">
    <text evidence="1">Catalyzes the transfer of an acyl group from acyl-phosphate (acyl-PO(4)) to glycerol-3-phosphate (G3P) to form lysophosphatidic acid (LPA). This enzyme utilizes acyl-phosphate as fatty acyl donor, but not acyl-CoA or acyl-ACP.</text>
</comment>
<comment type="catalytic activity">
    <reaction evidence="1">
        <text>an acyl phosphate + sn-glycerol 3-phosphate = a 1-acyl-sn-glycero-3-phosphate + phosphate</text>
        <dbReference type="Rhea" id="RHEA:34075"/>
        <dbReference type="ChEBI" id="CHEBI:43474"/>
        <dbReference type="ChEBI" id="CHEBI:57597"/>
        <dbReference type="ChEBI" id="CHEBI:57970"/>
        <dbReference type="ChEBI" id="CHEBI:59918"/>
        <dbReference type="EC" id="2.3.1.275"/>
    </reaction>
</comment>
<comment type="pathway">
    <text evidence="1">Lipid metabolism; phospholipid metabolism.</text>
</comment>
<comment type="subunit">
    <text evidence="1">Probably interacts with PlsX.</text>
</comment>
<comment type="subcellular location">
    <subcellularLocation>
        <location evidence="1">Cell membrane</location>
        <topology evidence="1">Multi-pass membrane protein</topology>
    </subcellularLocation>
</comment>
<comment type="similarity">
    <text evidence="1">Belongs to the PlsY family.</text>
</comment>
<evidence type="ECO:0000255" key="1">
    <source>
        <dbReference type="HAMAP-Rule" id="MF_01043"/>
    </source>
</evidence>
<keyword id="KW-1003">Cell membrane</keyword>
<keyword id="KW-0444">Lipid biosynthesis</keyword>
<keyword id="KW-0443">Lipid metabolism</keyword>
<keyword id="KW-0472">Membrane</keyword>
<keyword id="KW-0594">Phospholipid biosynthesis</keyword>
<keyword id="KW-1208">Phospholipid metabolism</keyword>
<keyword id="KW-1185">Reference proteome</keyword>
<keyword id="KW-0808">Transferase</keyword>
<keyword id="KW-0812">Transmembrane</keyword>
<keyword id="KW-1133">Transmembrane helix</keyword>
<feature type="chain" id="PRO_1000149577" description="Glycerol-3-phosphate acyltransferase">
    <location>
        <begin position="1"/>
        <end position="194"/>
    </location>
</feature>
<feature type="transmembrane region" description="Helical" evidence="1">
    <location>
        <begin position="3"/>
        <end position="23"/>
    </location>
</feature>
<feature type="transmembrane region" description="Helical" evidence="1">
    <location>
        <begin position="47"/>
        <end position="67"/>
    </location>
</feature>
<feature type="transmembrane region" description="Helical" evidence="1">
    <location>
        <begin position="78"/>
        <end position="97"/>
    </location>
</feature>
<feature type="transmembrane region" description="Helical" evidence="1">
    <location>
        <begin position="112"/>
        <end position="132"/>
    </location>
</feature>
<feature type="transmembrane region" description="Helical" evidence="1">
    <location>
        <begin position="153"/>
        <end position="173"/>
    </location>
</feature>
<name>PLSY_MACCJ</name>